<dbReference type="EMBL" id="X69091">
    <property type="protein sequence ID" value="CAA48834.1"/>
    <property type="molecule type" value="Genomic_DNA"/>
</dbReference>
<dbReference type="EMBL" id="X69091">
    <property type="protein sequence ID" value="CAA48835.1"/>
    <property type="molecule type" value="Genomic_DNA"/>
</dbReference>
<dbReference type="EMBL" id="X69091">
    <property type="protein sequence ID" value="CAA48836.1"/>
    <property type="molecule type" value="Genomic_DNA"/>
</dbReference>
<dbReference type="EMBL" id="X69091">
    <property type="protein sequence ID" value="CAA48838.1"/>
    <property type="molecule type" value="Genomic_DNA"/>
</dbReference>
<dbReference type="EMBL" id="X69091">
    <property type="protein sequence ID" value="CAA48840.1"/>
    <property type="molecule type" value="Genomic_DNA"/>
</dbReference>
<dbReference type="SMR" id="Q06221"/>
<dbReference type="GO" id="GO:0016020">
    <property type="term" value="C:membrane"/>
    <property type="evidence" value="ECO:0007669"/>
    <property type="project" value="UniProtKB-SubCell"/>
</dbReference>
<dbReference type="GO" id="GO:0015149">
    <property type="term" value="F:hexose transmembrane transporter activity"/>
    <property type="evidence" value="ECO:0007669"/>
    <property type="project" value="TreeGrafter"/>
</dbReference>
<dbReference type="CDD" id="cd17315">
    <property type="entry name" value="MFS_GLUT_like"/>
    <property type="match status" value="1"/>
</dbReference>
<dbReference type="FunFam" id="1.20.1250.20:FF:000857">
    <property type="entry name" value="Glucose transporter 1B/1C/1D/1F/2B"/>
    <property type="match status" value="1"/>
</dbReference>
<dbReference type="FunFam" id="1.20.1250.20:FF:000357">
    <property type="entry name" value="Glucose transporter, lmgt1"/>
    <property type="match status" value="1"/>
</dbReference>
<dbReference type="Gene3D" id="1.20.1250.20">
    <property type="entry name" value="MFS general substrate transporter like domains"/>
    <property type="match status" value="2"/>
</dbReference>
<dbReference type="InterPro" id="IPR045263">
    <property type="entry name" value="GLUT"/>
</dbReference>
<dbReference type="InterPro" id="IPR020846">
    <property type="entry name" value="MFS_dom"/>
</dbReference>
<dbReference type="InterPro" id="IPR005828">
    <property type="entry name" value="MFS_sugar_transport-like"/>
</dbReference>
<dbReference type="InterPro" id="IPR036259">
    <property type="entry name" value="MFS_trans_sf"/>
</dbReference>
<dbReference type="InterPro" id="IPR003663">
    <property type="entry name" value="Sugar/inositol_transpt"/>
</dbReference>
<dbReference type="NCBIfam" id="TIGR00879">
    <property type="entry name" value="SP"/>
    <property type="match status" value="1"/>
</dbReference>
<dbReference type="PANTHER" id="PTHR23503:SF8">
    <property type="entry name" value="FACILITATED GLUCOSE TRANSPORTER PROTEIN 1"/>
    <property type="match status" value="1"/>
</dbReference>
<dbReference type="PANTHER" id="PTHR23503">
    <property type="entry name" value="SOLUTE CARRIER FAMILY 2"/>
    <property type="match status" value="1"/>
</dbReference>
<dbReference type="Pfam" id="PF00083">
    <property type="entry name" value="Sugar_tr"/>
    <property type="match status" value="1"/>
</dbReference>
<dbReference type="PRINTS" id="PR00171">
    <property type="entry name" value="SUGRTRNSPORT"/>
</dbReference>
<dbReference type="SUPFAM" id="SSF103473">
    <property type="entry name" value="MFS general substrate transporter"/>
    <property type="match status" value="1"/>
</dbReference>
<dbReference type="PROSITE" id="PS50850">
    <property type="entry name" value="MFS"/>
    <property type="match status" value="1"/>
</dbReference>
<gene>
    <name type="primary">THT1B</name>
</gene>
<gene>
    <name type="primary">THT1C</name>
</gene>
<gene>
    <name type="primary">THT1D</name>
</gene>
<gene>
    <name type="primary">THT1F</name>
</gene>
<gene>
    <name type="primary">THT2B</name>
</gene>
<accession>Q06221</accession>
<keyword id="KW-0472">Membrane</keyword>
<keyword id="KW-0762">Sugar transport</keyword>
<keyword id="KW-0812">Transmembrane</keyword>
<keyword id="KW-1133">Transmembrane helix</keyword>
<keyword id="KW-0813">Transport</keyword>
<proteinExistence type="evidence at transcript level"/>
<reference key="1">
    <citation type="journal article" date="1993" name="Mol. Cell. Biol.">
        <title>Differential regulation of two distinct families of glucose transporter genes in Trypanosoma brucei.</title>
        <authorList>
            <person name="Bringaud F."/>
            <person name="Baltz T."/>
        </authorList>
    </citation>
    <scope>NUCLEOTIDE SEQUENCE [GENOMIC DNA]</scope>
    <source>
        <strain>EATRO 164</strain>
    </source>
</reference>
<evidence type="ECO:0000255" key="1"/>
<evidence type="ECO:0000256" key="2">
    <source>
        <dbReference type="SAM" id="MobiDB-lite"/>
    </source>
</evidence>
<evidence type="ECO:0000305" key="3"/>
<organism>
    <name type="scientific">Trypanosoma brucei brucei</name>
    <dbReference type="NCBI Taxonomy" id="5702"/>
    <lineage>
        <taxon>Eukaryota</taxon>
        <taxon>Discoba</taxon>
        <taxon>Euglenozoa</taxon>
        <taxon>Kinetoplastea</taxon>
        <taxon>Metakinetoplastina</taxon>
        <taxon>Trypanosomatida</taxon>
        <taxon>Trypanosomatidae</taxon>
        <taxon>Trypanosoma</taxon>
    </lineage>
</organism>
<protein>
    <recommendedName>
        <fullName>Glucose transporter 1B/1C/1D/1F/2B</fullName>
    </recommendedName>
</protein>
<name>TH11_TRYBB</name>
<feature type="chain" id="PRO_0000050384" description="Glucose transporter 1B/1C/1D/1F/2B">
    <location>
        <begin position="1"/>
        <end position="527"/>
    </location>
</feature>
<feature type="topological domain" description="Cytoplasmic" evidence="1">
    <location>
        <begin position="1"/>
        <end position="43"/>
    </location>
</feature>
<feature type="transmembrane region" description="Helical; Name=1" evidence="1">
    <location>
        <begin position="44"/>
        <end position="64"/>
    </location>
</feature>
<feature type="topological domain" description="Extracellular" evidence="1">
    <location>
        <begin position="65"/>
        <end position="118"/>
    </location>
</feature>
<feature type="transmembrane region" description="Helical; Name=2" evidence="1">
    <location>
        <begin position="119"/>
        <end position="139"/>
    </location>
</feature>
<feature type="topological domain" description="Cytoplasmic" evidence="1">
    <location>
        <begin position="140"/>
        <end position="151"/>
    </location>
</feature>
<feature type="transmembrane region" description="Helical; Name=3" evidence="1">
    <location>
        <begin position="152"/>
        <end position="172"/>
    </location>
</feature>
<feature type="topological domain" description="Extracellular" evidence="1">
    <location>
        <begin position="173"/>
        <end position="175"/>
    </location>
</feature>
<feature type="transmembrane region" description="Helical; Name=4" evidence="1">
    <location>
        <begin position="176"/>
        <end position="196"/>
    </location>
</feature>
<feature type="topological domain" description="Cytoplasmic" evidence="1">
    <location>
        <begin position="197"/>
        <end position="213"/>
    </location>
</feature>
<feature type="transmembrane region" description="Helical; Name=5" evidence="1">
    <location>
        <begin position="214"/>
        <end position="234"/>
    </location>
</feature>
<feature type="topological domain" description="Extracellular" evidence="1">
    <location>
        <begin position="235"/>
        <end position="249"/>
    </location>
</feature>
<feature type="transmembrane region" description="Helical; Name=6" evidence="1">
    <location>
        <begin position="250"/>
        <end position="270"/>
    </location>
</feature>
<feature type="topological domain" description="Cytoplasmic" evidence="1">
    <location>
        <begin position="271"/>
        <end position="299"/>
    </location>
</feature>
<feature type="transmembrane region" description="Helical; Name=7" evidence="1">
    <location>
        <begin position="300"/>
        <end position="320"/>
    </location>
</feature>
<feature type="topological domain" description="Extracellular" evidence="1">
    <location>
        <begin position="321"/>
        <end position="338"/>
    </location>
</feature>
<feature type="transmembrane region" description="Helical; Name=8" evidence="1">
    <location>
        <begin position="339"/>
        <end position="359"/>
    </location>
</feature>
<feature type="topological domain" description="Cytoplasmic" evidence="1">
    <location>
        <begin position="360"/>
        <end position="372"/>
    </location>
</feature>
<feature type="transmembrane region" description="Helical; Name=9" evidence="1">
    <location>
        <begin position="373"/>
        <end position="393"/>
    </location>
</feature>
<feature type="topological domain" description="Extracellular" evidence="1">
    <location>
        <begin position="394"/>
        <end position="403"/>
    </location>
</feature>
<feature type="transmembrane region" description="Helical; Name=10" evidence="1">
    <location>
        <begin position="404"/>
        <end position="424"/>
    </location>
</feature>
<feature type="topological domain" description="Cytoplasmic" evidence="1">
    <location>
        <begin position="425"/>
        <end position="436"/>
    </location>
</feature>
<feature type="transmembrane region" description="Helical; Name=11" evidence="1">
    <location>
        <begin position="437"/>
        <end position="457"/>
    </location>
</feature>
<feature type="topological domain" description="Extracellular" evidence="1">
    <location>
        <begin position="458"/>
        <end position="475"/>
    </location>
</feature>
<feature type="transmembrane region" description="Helical; Name=12" evidence="1">
    <location>
        <begin position="476"/>
        <end position="496"/>
    </location>
</feature>
<feature type="topological domain" description="Cytoplasmic" evidence="1">
    <location>
        <begin position="497"/>
        <end position="527"/>
    </location>
</feature>
<feature type="region of interest" description="Disordered" evidence="2">
    <location>
        <begin position="1"/>
        <end position="22"/>
    </location>
</feature>
<feature type="region of interest" description="Disordered" evidence="2">
    <location>
        <begin position="506"/>
        <end position="527"/>
    </location>
</feature>
<feature type="compositionally biased region" description="Basic and acidic residues" evidence="2">
    <location>
        <begin position="506"/>
        <end position="515"/>
    </location>
</feature>
<sequence length="527" mass="56470">MTERRDNVSHAPDAIEGPNDGAHAEDTSPGFFSLENLGVAQVQVVGGTLNGYVIGYVAVYLLLYLTATECKFTTEGACGGRKIYGCKWSGTTCKFENPKCSEGSDPSDSCKNEVAYTSVYSGIFACAMIVGSMVGSIIAGKCITTFGLKKSFIIVSITCTIACVVVQVAIEYNNYYALCTGRVLIGLGVGILCSVFPMYVNENAHPKLCKMDGVLFQVFTTLGIMLAAMLGLILDKTGASKEEANMAGRLHVFSAVPLGLSVAMFLVGMFLRESTATFAQDDDGKADGGMDPNEYGWGQMLWPLFMGAVTAGTLQLTGINAVMNYAPKITENLGMDPSLGNFLVMAWNFVTSLVAIPLASRFTMRQMFITCSFVASCMCLFLCGIPVFPGVAGKEVKNGVATTGIALFIAAFEFGVGSCFFVLAQDLFPPSFRPKGGSFVVMMQFIFNILINLLYPITTEAISGGATGNQDKGQAVAFILFGLIGLICSVLQFFYLYPYDANQDHENDHGGEPVEQKTYPVEASPRN</sequence>
<comment type="function">
    <text>Facilitative glucose transporter.</text>
</comment>
<comment type="subcellular location">
    <subcellularLocation>
        <location>Membrane</location>
        <topology>Multi-pass membrane protein</topology>
    </subcellularLocation>
</comment>
<comment type="developmental stage">
    <text>Expressed specifically in bloodstream forms.</text>
</comment>
<comment type="similarity">
    <text evidence="3">Belongs to the major facilitator superfamily. Sugar transporter (TC 2.A.1.1) family.</text>
</comment>